<reference key="1">
    <citation type="journal article" date="2010" name="PLoS ONE">
        <title>The complete genome sequence of Cupriavidus metallidurans strain CH34, a master survivalist in harsh and anthropogenic environments.</title>
        <authorList>
            <person name="Janssen P.J."/>
            <person name="Van Houdt R."/>
            <person name="Moors H."/>
            <person name="Monsieurs P."/>
            <person name="Morin N."/>
            <person name="Michaux A."/>
            <person name="Benotmane M.A."/>
            <person name="Leys N."/>
            <person name="Vallaeys T."/>
            <person name="Lapidus A."/>
            <person name="Monchy S."/>
            <person name="Medigue C."/>
            <person name="Taghavi S."/>
            <person name="McCorkle S."/>
            <person name="Dunn J."/>
            <person name="van der Lelie D."/>
            <person name="Mergeay M."/>
        </authorList>
    </citation>
    <scope>NUCLEOTIDE SEQUENCE [LARGE SCALE GENOMIC DNA]</scope>
    <source>
        <strain>ATCC 43123 / DSM 2839 / NBRC 102507 / CH34</strain>
    </source>
</reference>
<protein>
    <recommendedName>
        <fullName evidence="1">Aspartate carbamoyltransferase catalytic subunit</fullName>
        <ecNumber evidence="1">2.1.3.2</ecNumber>
    </recommendedName>
    <alternativeName>
        <fullName evidence="1">Aspartate transcarbamylase</fullName>
        <shortName evidence="1">ATCase</shortName>
    </alternativeName>
</protein>
<feature type="chain" id="PRO_0000321147" description="Aspartate carbamoyltransferase catalytic subunit">
    <location>
        <begin position="1"/>
        <end position="323"/>
    </location>
</feature>
<feature type="binding site" evidence="1">
    <location>
        <position position="71"/>
    </location>
    <ligand>
        <name>carbamoyl phosphate</name>
        <dbReference type="ChEBI" id="CHEBI:58228"/>
    </ligand>
</feature>
<feature type="binding site" evidence="1">
    <location>
        <position position="72"/>
    </location>
    <ligand>
        <name>carbamoyl phosphate</name>
        <dbReference type="ChEBI" id="CHEBI:58228"/>
    </ligand>
</feature>
<feature type="binding site" evidence="1">
    <location>
        <position position="99"/>
    </location>
    <ligand>
        <name>L-aspartate</name>
        <dbReference type="ChEBI" id="CHEBI:29991"/>
    </ligand>
</feature>
<feature type="binding site" evidence="1">
    <location>
        <position position="121"/>
    </location>
    <ligand>
        <name>carbamoyl phosphate</name>
        <dbReference type="ChEBI" id="CHEBI:58228"/>
    </ligand>
</feature>
<feature type="binding site" evidence="1">
    <location>
        <position position="151"/>
    </location>
    <ligand>
        <name>carbamoyl phosphate</name>
        <dbReference type="ChEBI" id="CHEBI:58228"/>
    </ligand>
</feature>
<feature type="binding site" evidence="1">
    <location>
        <position position="154"/>
    </location>
    <ligand>
        <name>carbamoyl phosphate</name>
        <dbReference type="ChEBI" id="CHEBI:58228"/>
    </ligand>
</feature>
<feature type="binding site" evidence="1">
    <location>
        <position position="184"/>
    </location>
    <ligand>
        <name>L-aspartate</name>
        <dbReference type="ChEBI" id="CHEBI:29991"/>
    </ligand>
</feature>
<feature type="binding site" evidence="1">
    <location>
        <position position="239"/>
    </location>
    <ligand>
        <name>L-aspartate</name>
        <dbReference type="ChEBI" id="CHEBI:29991"/>
    </ligand>
</feature>
<feature type="binding site" evidence="1">
    <location>
        <position position="280"/>
    </location>
    <ligand>
        <name>carbamoyl phosphate</name>
        <dbReference type="ChEBI" id="CHEBI:58228"/>
    </ligand>
</feature>
<feature type="binding site" evidence="1">
    <location>
        <position position="281"/>
    </location>
    <ligand>
        <name>carbamoyl phosphate</name>
        <dbReference type="ChEBI" id="CHEBI:58228"/>
    </ligand>
</feature>
<comment type="function">
    <text evidence="1">Catalyzes the condensation of carbamoyl phosphate and aspartate to form carbamoyl aspartate and inorganic phosphate, the committed step in the de novo pyrimidine nucleotide biosynthesis pathway.</text>
</comment>
<comment type="catalytic activity">
    <reaction evidence="1">
        <text>carbamoyl phosphate + L-aspartate = N-carbamoyl-L-aspartate + phosphate + H(+)</text>
        <dbReference type="Rhea" id="RHEA:20013"/>
        <dbReference type="ChEBI" id="CHEBI:15378"/>
        <dbReference type="ChEBI" id="CHEBI:29991"/>
        <dbReference type="ChEBI" id="CHEBI:32814"/>
        <dbReference type="ChEBI" id="CHEBI:43474"/>
        <dbReference type="ChEBI" id="CHEBI:58228"/>
        <dbReference type="EC" id="2.1.3.2"/>
    </reaction>
</comment>
<comment type="pathway">
    <text evidence="1">Pyrimidine metabolism; UMP biosynthesis via de novo pathway; (S)-dihydroorotate from bicarbonate: step 2/3.</text>
</comment>
<comment type="subunit">
    <text evidence="1">Heterododecamer (2C3:3R2) of six catalytic PyrB chains organized as two trimers (C3), and six regulatory PyrI chains organized as three dimers (R2).</text>
</comment>
<comment type="similarity">
    <text evidence="1">Belongs to the aspartate/ornithine carbamoyltransferase superfamily. ATCase family.</text>
</comment>
<dbReference type="EC" id="2.1.3.2" evidence="1"/>
<dbReference type="EMBL" id="CP000352">
    <property type="protein sequence ID" value="ABF09613.1"/>
    <property type="molecule type" value="Genomic_DNA"/>
</dbReference>
<dbReference type="RefSeq" id="WP_008646281.1">
    <property type="nucleotide sequence ID" value="NC_007973.1"/>
</dbReference>
<dbReference type="SMR" id="Q1LJR3"/>
<dbReference type="STRING" id="266264.Rmet_2740"/>
<dbReference type="KEGG" id="rme:Rmet_2740"/>
<dbReference type="eggNOG" id="COG0540">
    <property type="taxonomic scope" value="Bacteria"/>
</dbReference>
<dbReference type="HOGENOM" id="CLU_043846_2_0_4"/>
<dbReference type="UniPathway" id="UPA00070">
    <property type="reaction ID" value="UER00116"/>
</dbReference>
<dbReference type="Proteomes" id="UP000002429">
    <property type="component" value="Chromosome"/>
</dbReference>
<dbReference type="GO" id="GO:0005829">
    <property type="term" value="C:cytosol"/>
    <property type="evidence" value="ECO:0007669"/>
    <property type="project" value="TreeGrafter"/>
</dbReference>
<dbReference type="GO" id="GO:0016597">
    <property type="term" value="F:amino acid binding"/>
    <property type="evidence" value="ECO:0007669"/>
    <property type="project" value="InterPro"/>
</dbReference>
<dbReference type="GO" id="GO:0004070">
    <property type="term" value="F:aspartate carbamoyltransferase activity"/>
    <property type="evidence" value="ECO:0007669"/>
    <property type="project" value="UniProtKB-UniRule"/>
</dbReference>
<dbReference type="GO" id="GO:0006207">
    <property type="term" value="P:'de novo' pyrimidine nucleobase biosynthetic process"/>
    <property type="evidence" value="ECO:0007669"/>
    <property type="project" value="InterPro"/>
</dbReference>
<dbReference type="GO" id="GO:0044205">
    <property type="term" value="P:'de novo' UMP biosynthetic process"/>
    <property type="evidence" value="ECO:0007669"/>
    <property type="project" value="UniProtKB-UniRule"/>
</dbReference>
<dbReference type="GO" id="GO:0006520">
    <property type="term" value="P:amino acid metabolic process"/>
    <property type="evidence" value="ECO:0007669"/>
    <property type="project" value="InterPro"/>
</dbReference>
<dbReference type="FunFam" id="3.40.50.1370:FF:000007">
    <property type="entry name" value="Aspartate carbamoyltransferase"/>
    <property type="match status" value="1"/>
</dbReference>
<dbReference type="Gene3D" id="3.40.50.1370">
    <property type="entry name" value="Aspartate/ornithine carbamoyltransferase"/>
    <property type="match status" value="2"/>
</dbReference>
<dbReference type="HAMAP" id="MF_00001">
    <property type="entry name" value="Asp_carb_tr"/>
    <property type="match status" value="1"/>
</dbReference>
<dbReference type="InterPro" id="IPR006132">
    <property type="entry name" value="Asp/Orn_carbamoyltranf_P-bd"/>
</dbReference>
<dbReference type="InterPro" id="IPR006130">
    <property type="entry name" value="Asp/Orn_carbamoylTrfase"/>
</dbReference>
<dbReference type="InterPro" id="IPR036901">
    <property type="entry name" value="Asp/Orn_carbamoylTrfase_sf"/>
</dbReference>
<dbReference type="InterPro" id="IPR002082">
    <property type="entry name" value="Asp_carbamoyltransf"/>
</dbReference>
<dbReference type="InterPro" id="IPR006131">
    <property type="entry name" value="Asp_carbamoyltransf_Asp/Orn-bd"/>
</dbReference>
<dbReference type="NCBIfam" id="TIGR00670">
    <property type="entry name" value="asp_carb_tr"/>
    <property type="match status" value="1"/>
</dbReference>
<dbReference type="NCBIfam" id="NF002032">
    <property type="entry name" value="PRK00856.1"/>
    <property type="match status" value="1"/>
</dbReference>
<dbReference type="PANTHER" id="PTHR45753:SF6">
    <property type="entry name" value="ASPARTATE CARBAMOYLTRANSFERASE"/>
    <property type="match status" value="1"/>
</dbReference>
<dbReference type="PANTHER" id="PTHR45753">
    <property type="entry name" value="ORNITHINE CARBAMOYLTRANSFERASE, MITOCHONDRIAL"/>
    <property type="match status" value="1"/>
</dbReference>
<dbReference type="Pfam" id="PF00185">
    <property type="entry name" value="OTCace"/>
    <property type="match status" value="1"/>
</dbReference>
<dbReference type="Pfam" id="PF02729">
    <property type="entry name" value="OTCace_N"/>
    <property type="match status" value="1"/>
</dbReference>
<dbReference type="PRINTS" id="PR00100">
    <property type="entry name" value="AOTCASE"/>
</dbReference>
<dbReference type="PRINTS" id="PR00101">
    <property type="entry name" value="ATCASE"/>
</dbReference>
<dbReference type="SUPFAM" id="SSF53671">
    <property type="entry name" value="Aspartate/ornithine carbamoyltransferase"/>
    <property type="match status" value="1"/>
</dbReference>
<dbReference type="PROSITE" id="PS00097">
    <property type="entry name" value="CARBAMOYLTRANSFERASE"/>
    <property type="match status" value="1"/>
</dbReference>
<organism>
    <name type="scientific">Cupriavidus metallidurans (strain ATCC 43123 / DSM 2839 / NBRC 102507 / CH34)</name>
    <name type="common">Ralstonia metallidurans</name>
    <dbReference type="NCBI Taxonomy" id="266264"/>
    <lineage>
        <taxon>Bacteria</taxon>
        <taxon>Pseudomonadati</taxon>
        <taxon>Pseudomonadota</taxon>
        <taxon>Betaproteobacteria</taxon>
        <taxon>Burkholderiales</taxon>
        <taxon>Burkholderiaceae</taxon>
        <taxon>Cupriavidus</taxon>
    </lineage>
</organism>
<gene>
    <name evidence="1" type="primary">pyrB</name>
    <name type="ordered locus">Rmet_2740</name>
</gene>
<name>PYRB_CUPMC</name>
<keyword id="KW-0665">Pyrimidine biosynthesis</keyword>
<keyword id="KW-1185">Reference proteome</keyword>
<keyword id="KW-0808">Transferase</keyword>
<sequence length="323" mass="35248">MTKTFRNPQLTKNGELKHLLSIEGLSRDMITHILDTASQFVSLSDSDREVKKVPLLRGKSVFNLFFENSTRTRTTFEIAAKRLSADVLNLNINASSTSKGESLLDTINNLSAMSADMFVVRHASSGAPYLIAEHVAPHVHVINAGDGRHAHPTQGLLDMYTIRHFKKDFTNLTVAIVGDILHSRVARSDIHALTTLGVPEVRAIGPRTLLPSGLEQMGVRVFHNMEEGLKGVDVVIMLRLQNERMTGALLPSAQEYFKAYGLTPERLALAKPDAIVMHPGPMNRGVEIDSAVADGPQSVILNQVTFGIAVRMAVMGIVAGNND</sequence>
<proteinExistence type="inferred from homology"/>
<evidence type="ECO:0000255" key="1">
    <source>
        <dbReference type="HAMAP-Rule" id="MF_00001"/>
    </source>
</evidence>
<accession>Q1LJR3</accession>